<sequence>MIPSLWISKTGLDAQQINMNVISNNLANVSTNGFKRSRAVFEDLMYQTMRQAGTNSSIDTTLPSGLQLGTGVRPVSTEKIYSQGNLSKTDSSKDVAINGPGFFQVQLPDGNIAYTRDGSFQLDQNGQLVTNSGYPIIPEINIPPNSINMNIGRDGIVSVTIQGQTQPISIGQLNLINFVNHSGLESLGENLYQETQASGNPIDTTPGLNGTGLLYQGYVETSNVNVAEELVNMIQTQRAYEINSKSINTSDQMLQKLSQL</sequence>
<proteinExistence type="inferred from homology"/>
<accession>Q8K9K4</accession>
<protein>
    <recommendedName>
        <fullName>Flagellar basal-body rod protein FlgG</fullName>
    </recommendedName>
    <alternativeName>
        <fullName>Distal rod protein</fullName>
    </alternativeName>
</protein>
<dbReference type="EMBL" id="AE013218">
    <property type="protein sequence ID" value="AAM67884.1"/>
    <property type="molecule type" value="Genomic_DNA"/>
</dbReference>
<dbReference type="RefSeq" id="WP_011053851.1">
    <property type="nucleotide sequence ID" value="NC_004061.1"/>
</dbReference>
<dbReference type="SMR" id="Q8K9K4"/>
<dbReference type="STRING" id="198804.BUsg_330"/>
<dbReference type="GeneID" id="93003801"/>
<dbReference type="KEGG" id="bas:BUsg_330"/>
<dbReference type="eggNOG" id="COG4786">
    <property type="taxonomic scope" value="Bacteria"/>
</dbReference>
<dbReference type="HOGENOM" id="CLU_013687_0_1_6"/>
<dbReference type="Proteomes" id="UP000000416">
    <property type="component" value="Chromosome"/>
</dbReference>
<dbReference type="GO" id="GO:0009426">
    <property type="term" value="C:bacterial-type flagellum basal body, distal rod"/>
    <property type="evidence" value="ECO:0007669"/>
    <property type="project" value="InterPro"/>
</dbReference>
<dbReference type="GO" id="GO:0071978">
    <property type="term" value="P:bacterial-type flagellum-dependent swarming motility"/>
    <property type="evidence" value="ECO:0007669"/>
    <property type="project" value="TreeGrafter"/>
</dbReference>
<dbReference type="InterPro" id="IPR001444">
    <property type="entry name" value="Flag_bb_rod_N"/>
</dbReference>
<dbReference type="InterPro" id="IPR019776">
    <property type="entry name" value="Flagellar_basal_body_rod_CS"/>
</dbReference>
<dbReference type="InterPro" id="IPR020013">
    <property type="entry name" value="Flagellar_FlgE/F/G"/>
</dbReference>
<dbReference type="InterPro" id="IPR010930">
    <property type="entry name" value="Flg_bb/hook_C_dom"/>
</dbReference>
<dbReference type="InterPro" id="IPR037925">
    <property type="entry name" value="FlgE/F/G-like"/>
</dbReference>
<dbReference type="InterPro" id="IPR012834">
    <property type="entry name" value="FlgG_G_neg"/>
</dbReference>
<dbReference type="InterPro" id="IPR053967">
    <property type="entry name" value="LlgE_F_G-like_D1"/>
</dbReference>
<dbReference type="NCBIfam" id="TIGR03506">
    <property type="entry name" value="FlgEFG_subfam"/>
    <property type="match status" value="2"/>
</dbReference>
<dbReference type="NCBIfam" id="TIGR02488">
    <property type="entry name" value="flgG_G_neg"/>
    <property type="match status" value="1"/>
</dbReference>
<dbReference type="PANTHER" id="PTHR30435:SF19">
    <property type="entry name" value="FLAGELLAR BASAL-BODY ROD PROTEIN FLGG"/>
    <property type="match status" value="1"/>
</dbReference>
<dbReference type="PANTHER" id="PTHR30435">
    <property type="entry name" value="FLAGELLAR PROTEIN"/>
    <property type="match status" value="1"/>
</dbReference>
<dbReference type="Pfam" id="PF00460">
    <property type="entry name" value="Flg_bb_rod"/>
    <property type="match status" value="1"/>
</dbReference>
<dbReference type="Pfam" id="PF06429">
    <property type="entry name" value="Flg_bbr_C"/>
    <property type="match status" value="1"/>
</dbReference>
<dbReference type="Pfam" id="PF22692">
    <property type="entry name" value="LlgE_F_G_D1"/>
    <property type="match status" value="1"/>
</dbReference>
<dbReference type="SUPFAM" id="SSF117143">
    <property type="entry name" value="Flagellar hook protein flgE"/>
    <property type="match status" value="1"/>
</dbReference>
<dbReference type="PROSITE" id="PS00588">
    <property type="entry name" value="FLAGELLA_BB_ROD"/>
    <property type="match status" value="1"/>
</dbReference>
<comment type="subunit">
    <text evidence="1">The basal body constitutes a major portion of the flagellar organelle and consists of four rings (L,P,S, and M) mounted on a central rod. The rod consists of about 26 subunits of FlgG in the distal portion, and FlgB, FlgC and FlgF are thought to build up the proximal portion of the rod with about 6 subunits each (By similarity).</text>
</comment>
<comment type="subcellular location">
    <subcellularLocation>
        <location evidence="1">Bacterial flagellum basal body</location>
    </subcellularLocation>
</comment>
<comment type="similarity">
    <text evidence="2">Belongs to the flagella basal body rod proteins family.</text>
</comment>
<keyword id="KW-0975">Bacterial flagellum</keyword>
<evidence type="ECO:0000250" key="1"/>
<evidence type="ECO:0000305" key="2"/>
<feature type="chain" id="PRO_0000180846" description="Flagellar basal-body rod protein FlgG">
    <location>
        <begin position="1"/>
        <end position="260"/>
    </location>
</feature>
<reference key="1">
    <citation type="journal article" date="2002" name="Science">
        <title>50 million years of genomic stasis in endosymbiotic bacteria.</title>
        <authorList>
            <person name="Tamas I."/>
            <person name="Klasson L."/>
            <person name="Canbaeck B."/>
            <person name="Naeslund A.K."/>
            <person name="Eriksson A.-S."/>
            <person name="Wernegreen J.J."/>
            <person name="Sandstroem J.P."/>
            <person name="Moran N.A."/>
            <person name="Andersson S.G.E."/>
        </authorList>
    </citation>
    <scope>NUCLEOTIDE SEQUENCE [LARGE SCALE GENOMIC DNA]</scope>
    <source>
        <strain>Sg</strain>
    </source>
</reference>
<name>FLGG_BUCAP</name>
<organism>
    <name type="scientific">Buchnera aphidicola subsp. Schizaphis graminum (strain Sg)</name>
    <dbReference type="NCBI Taxonomy" id="198804"/>
    <lineage>
        <taxon>Bacteria</taxon>
        <taxon>Pseudomonadati</taxon>
        <taxon>Pseudomonadota</taxon>
        <taxon>Gammaproteobacteria</taxon>
        <taxon>Enterobacterales</taxon>
        <taxon>Erwiniaceae</taxon>
        <taxon>Buchnera</taxon>
    </lineage>
</organism>
<gene>
    <name type="primary">flgG</name>
    <name type="ordered locus">BUsg_330</name>
</gene>